<feature type="chain" id="PRO_1000095379" description="Arginine--tRNA ligase">
    <location>
        <begin position="1"/>
        <end position="575"/>
    </location>
</feature>
<feature type="short sequence motif" description="'HIGH' region">
    <location>
        <begin position="130"/>
        <end position="140"/>
    </location>
</feature>
<accession>A0L5I2</accession>
<name>SYR_MAGMM</name>
<proteinExistence type="inferred from homology"/>
<evidence type="ECO:0000255" key="1">
    <source>
        <dbReference type="HAMAP-Rule" id="MF_00123"/>
    </source>
</evidence>
<sequence>MRQSIEELMEHAQNTLLAEGVIPADAKLGGIKVERPKDKSHGDFSINTAMVLAKQARMKPRDLAQRLVDALPSGQGVVSRCEIAGPGFINFFVTPERLRGVVADVLQRGGSYGQGNVGAGQKVLVEFVSANPTGPMHVGHGRGAVTGDVLARILECAGYAVQREYYLNDAGVQVQVLGRSVMLRYRQLFGDAVEVAEGCYPGDYVVDIARALKEKDQDKWLEVARAEPDEYPREMLEFAMQQVLTWIKADLARLNIRFDHWFSEFSLHSEGRIEHALEVLSQKGCLYEGVLEPPKGKKSEAWASRPQLLFKATDFGDEVDRALRKSDGSYTYFAADVAYHLNKAERGFERLVNIWGADHGGYVRRVQAALGALTGKQNLLDVVLIQMVNLTRGGEPVKMSKRAGTFVTLEEVVEATSSDAVRFWFLSRGSGAQLDFDLDLAVAKNNDNPVYYVQYAHARICSIWDKAQHEGVALQAQGWSGVDLSPLGEGAEWDLIRKLDLFPDVVEGAAVHQEPHRIPYYLLDLAAAFHTFYNSHRIMDVDAGTRDARLVLILAVKQVIANGLELLGVQQPRSM</sequence>
<protein>
    <recommendedName>
        <fullName evidence="1">Arginine--tRNA ligase</fullName>
        <ecNumber evidence="1">6.1.1.19</ecNumber>
    </recommendedName>
    <alternativeName>
        <fullName evidence="1">Arginyl-tRNA synthetase</fullName>
        <shortName evidence="1">ArgRS</shortName>
    </alternativeName>
</protein>
<gene>
    <name evidence="1" type="primary">argS</name>
    <name type="ordered locus">Mmc1_0704</name>
</gene>
<comment type="catalytic activity">
    <reaction evidence="1">
        <text>tRNA(Arg) + L-arginine + ATP = L-arginyl-tRNA(Arg) + AMP + diphosphate</text>
        <dbReference type="Rhea" id="RHEA:20301"/>
        <dbReference type="Rhea" id="RHEA-COMP:9658"/>
        <dbReference type="Rhea" id="RHEA-COMP:9673"/>
        <dbReference type="ChEBI" id="CHEBI:30616"/>
        <dbReference type="ChEBI" id="CHEBI:32682"/>
        <dbReference type="ChEBI" id="CHEBI:33019"/>
        <dbReference type="ChEBI" id="CHEBI:78442"/>
        <dbReference type="ChEBI" id="CHEBI:78513"/>
        <dbReference type="ChEBI" id="CHEBI:456215"/>
        <dbReference type="EC" id="6.1.1.19"/>
    </reaction>
</comment>
<comment type="subunit">
    <text evidence="1">Monomer.</text>
</comment>
<comment type="subcellular location">
    <subcellularLocation>
        <location evidence="1">Cytoplasm</location>
    </subcellularLocation>
</comment>
<comment type="similarity">
    <text evidence="1">Belongs to the class-I aminoacyl-tRNA synthetase family.</text>
</comment>
<organism>
    <name type="scientific">Magnetococcus marinus (strain ATCC BAA-1437 / JCM 17883 / MC-1)</name>
    <dbReference type="NCBI Taxonomy" id="156889"/>
    <lineage>
        <taxon>Bacteria</taxon>
        <taxon>Pseudomonadati</taxon>
        <taxon>Pseudomonadota</taxon>
        <taxon>Alphaproteobacteria</taxon>
        <taxon>Magnetococcales</taxon>
        <taxon>Magnetococcaceae</taxon>
        <taxon>Magnetococcus</taxon>
    </lineage>
</organism>
<keyword id="KW-0030">Aminoacyl-tRNA synthetase</keyword>
<keyword id="KW-0067">ATP-binding</keyword>
<keyword id="KW-0963">Cytoplasm</keyword>
<keyword id="KW-0436">Ligase</keyword>
<keyword id="KW-0547">Nucleotide-binding</keyword>
<keyword id="KW-0648">Protein biosynthesis</keyword>
<keyword id="KW-1185">Reference proteome</keyword>
<reference key="1">
    <citation type="journal article" date="2009" name="Appl. Environ. Microbiol.">
        <title>Complete genome sequence of the chemolithoautotrophic marine magnetotactic coccus strain MC-1.</title>
        <authorList>
            <person name="Schubbe S."/>
            <person name="Williams T.J."/>
            <person name="Xie G."/>
            <person name="Kiss H.E."/>
            <person name="Brettin T.S."/>
            <person name="Martinez D."/>
            <person name="Ross C.A."/>
            <person name="Schuler D."/>
            <person name="Cox B.L."/>
            <person name="Nealson K.H."/>
            <person name="Bazylinski D.A."/>
        </authorList>
    </citation>
    <scope>NUCLEOTIDE SEQUENCE [LARGE SCALE GENOMIC DNA]</scope>
    <source>
        <strain>ATCC BAA-1437 / JCM 17883 / MC-1</strain>
    </source>
</reference>
<dbReference type="EC" id="6.1.1.19" evidence="1"/>
<dbReference type="EMBL" id="CP000471">
    <property type="protein sequence ID" value="ABK43225.1"/>
    <property type="molecule type" value="Genomic_DNA"/>
</dbReference>
<dbReference type="RefSeq" id="WP_011712385.1">
    <property type="nucleotide sequence ID" value="NC_008576.1"/>
</dbReference>
<dbReference type="SMR" id="A0L5I2"/>
<dbReference type="STRING" id="156889.Mmc1_0704"/>
<dbReference type="KEGG" id="mgm:Mmc1_0704"/>
<dbReference type="eggNOG" id="COG0018">
    <property type="taxonomic scope" value="Bacteria"/>
</dbReference>
<dbReference type="HOGENOM" id="CLU_006406_0_1_5"/>
<dbReference type="OrthoDB" id="9803211at2"/>
<dbReference type="Proteomes" id="UP000002586">
    <property type="component" value="Chromosome"/>
</dbReference>
<dbReference type="GO" id="GO:0005737">
    <property type="term" value="C:cytoplasm"/>
    <property type="evidence" value="ECO:0007669"/>
    <property type="project" value="UniProtKB-SubCell"/>
</dbReference>
<dbReference type="GO" id="GO:0004814">
    <property type="term" value="F:arginine-tRNA ligase activity"/>
    <property type="evidence" value="ECO:0007669"/>
    <property type="project" value="UniProtKB-UniRule"/>
</dbReference>
<dbReference type="GO" id="GO:0005524">
    <property type="term" value="F:ATP binding"/>
    <property type="evidence" value="ECO:0007669"/>
    <property type="project" value="UniProtKB-UniRule"/>
</dbReference>
<dbReference type="GO" id="GO:0006420">
    <property type="term" value="P:arginyl-tRNA aminoacylation"/>
    <property type="evidence" value="ECO:0007669"/>
    <property type="project" value="UniProtKB-UniRule"/>
</dbReference>
<dbReference type="CDD" id="cd00671">
    <property type="entry name" value="ArgRS_core"/>
    <property type="match status" value="1"/>
</dbReference>
<dbReference type="FunFam" id="1.10.730.10:FF:000008">
    <property type="entry name" value="Arginine--tRNA ligase"/>
    <property type="match status" value="1"/>
</dbReference>
<dbReference type="FunFam" id="3.30.1360.70:FF:000003">
    <property type="entry name" value="Arginine--tRNA ligase"/>
    <property type="match status" value="1"/>
</dbReference>
<dbReference type="FunFam" id="3.40.50.620:FF:000062">
    <property type="entry name" value="Arginine--tRNA ligase"/>
    <property type="match status" value="1"/>
</dbReference>
<dbReference type="Gene3D" id="3.30.1360.70">
    <property type="entry name" value="Arginyl tRNA synthetase N-terminal domain"/>
    <property type="match status" value="1"/>
</dbReference>
<dbReference type="Gene3D" id="3.40.50.620">
    <property type="entry name" value="HUPs"/>
    <property type="match status" value="1"/>
</dbReference>
<dbReference type="Gene3D" id="1.10.730.10">
    <property type="entry name" value="Isoleucyl-tRNA Synthetase, Domain 1"/>
    <property type="match status" value="1"/>
</dbReference>
<dbReference type="HAMAP" id="MF_00123">
    <property type="entry name" value="Arg_tRNA_synth"/>
    <property type="match status" value="1"/>
</dbReference>
<dbReference type="InterPro" id="IPR001412">
    <property type="entry name" value="aa-tRNA-synth_I_CS"/>
</dbReference>
<dbReference type="InterPro" id="IPR001278">
    <property type="entry name" value="Arg-tRNA-ligase"/>
</dbReference>
<dbReference type="InterPro" id="IPR005148">
    <property type="entry name" value="Arg-tRNA-synth_N"/>
</dbReference>
<dbReference type="InterPro" id="IPR036695">
    <property type="entry name" value="Arg-tRNA-synth_N_sf"/>
</dbReference>
<dbReference type="InterPro" id="IPR035684">
    <property type="entry name" value="ArgRS_core"/>
</dbReference>
<dbReference type="InterPro" id="IPR008909">
    <property type="entry name" value="DALR_anticod-bd"/>
</dbReference>
<dbReference type="InterPro" id="IPR014729">
    <property type="entry name" value="Rossmann-like_a/b/a_fold"/>
</dbReference>
<dbReference type="InterPro" id="IPR009080">
    <property type="entry name" value="tRNAsynth_Ia_anticodon-bd"/>
</dbReference>
<dbReference type="NCBIfam" id="TIGR00456">
    <property type="entry name" value="argS"/>
    <property type="match status" value="1"/>
</dbReference>
<dbReference type="PANTHER" id="PTHR11956:SF5">
    <property type="entry name" value="ARGININE--TRNA LIGASE, CYTOPLASMIC"/>
    <property type="match status" value="1"/>
</dbReference>
<dbReference type="PANTHER" id="PTHR11956">
    <property type="entry name" value="ARGINYL-TRNA SYNTHETASE"/>
    <property type="match status" value="1"/>
</dbReference>
<dbReference type="Pfam" id="PF03485">
    <property type="entry name" value="Arg_tRNA_synt_N"/>
    <property type="match status" value="1"/>
</dbReference>
<dbReference type="Pfam" id="PF05746">
    <property type="entry name" value="DALR_1"/>
    <property type="match status" value="1"/>
</dbReference>
<dbReference type="Pfam" id="PF00750">
    <property type="entry name" value="tRNA-synt_1d"/>
    <property type="match status" value="1"/>
</dbReference>
<dbReference type="PRINTS" id="PR01038">
    <property type="entry name" value="TRNASYNTHARG"/>
</dbReference>
<dbReference type="SMART" id="SM01016">
    <property type="entry name" value="Arg_tRNA_synt_N"/>
    <property type="match status" value="1"/>
</dbReference>
<dbReference type="SMART" id="SM00836">
    <property type="entry name" value="DALR_1"/>
    <property type="match status" value="1"/>
</dbReference>
<dbReference type="SUPFAM" id="SSF47323">
    <property type="entry name" value="Anticodon-binding domain of a subclass of class I aminoacyl-tRNA synthetases"/>
    <property type="match status" value="1"/>
</dbReference>
<dbReference type="SUPFAM" id="SSF55190">
    <property type="entry name" value="Arginyl-tRNA synthetase (ArgRS), N-terminal 'additional' domain"/>
    <property type="match status" value="1"/>
</dbReference>
<dbReference type="SUPFAM" id="SSF52374">
    <property type="entry name" value="Nucleotidylyl transferase"/>
    <property type="match status" value="1"/>
</dbReference>
<dbReference type="PROSITE" id="PS00178">
    <property type="entry name" value="AA_TRNA_LIGASE_I"/>
    <property type="match status" value="1"/>
</dbReference>